<gene>
    <name evidence="8" type="primary">Mitofilin</name>
    <name evidence="8" type="ORF">CG6455</name>
</gene>
<proteinExistence type="evidence at protein level"/>
<feature type="chain" id="PRO_0000084183" description="MICOS complex subunit Mic60">
    <location>
        <begin position="1"/>
        <end position="739"/>
    </location>
</feature>
<feature type="transmembrane region" description="Helical" evidence="2">
    <location>
        <begin position="69"/>
        <end position="89"/>
    </location>
</feature>
<feature type="region of interest" description="Disordered" evidence="3">
    <location>
        <begin position="23"/>
        <end position="63"/>
    </location>
</feature>
<feature type="region of interest" description="Disordered" evidence="3">
    <location>
        <begin position="154"/>
        <end position="219"/>
    </location>
</feature>
<feature type="coiled-coil region" evidence="2">
    <location>
        <begin position="283"/>
        <end position="339"/>
    </location>
</feature>
<feature type="compositionally biased region" description="Low complexity" evidence="3">
    <location>
        <begin position="47"/>
        <end position="61"/>
    </location>
</feature>
<feature type="compositionally biased region" description="Basic and acidic residues" evidence="3">
    <location>
        <begin position="163"/>
        <end position="198"/>
    </location>
</feature>
<feature type="compositionally biased region" description="Low complexity" evidence="3">
    <location>
        <begin position="199"/>
        <end position="212"/>
    </location>
</feature>
<feature type="splice variant" id="VSP_007006" description="In isoform B." evidence="5">
    <location>
        <begin position="1"/>
        <end position="518"/>
    </location>
</feature>
<feature type="sequence conflict" description="In Ref. 4; CAA71851." evidence="6" ref="4">
    <original>N</original>
    <variation>Y</variation>
    <location>
        <position position="25"/>
    </location>
</feature>
<feature type="sequence conflict" description="In Ref. 4; CAA71851." evidence="6" ref="4">
    <original>E</original>
    <variation>D</variation>
    <location>
        <position position="39"/>
    </location>
</feature>
<feature type="sequence conflict" description="In Ref. 4; CAA71851." evidence="6" ref="4">
    <original>E</original>
    <variation>K</variation>
    <location>
        <position position="264"/>
    </location>
</feature>
<evidence type="ECO:0000250" key="1">
    <source>
        <dbReference type="UniProtKB" id="Q16891"/>
    </source>
</evidence>
<evidence type="ECO:0000255" key="2"/>
<evidence type="ECO:0000256" key="3">
    <source>
        <dbReference type="SAM" id="MobiDB-lite"/>
    </source>
</evidence>
<evidence type="ECO:0000269" key="4">
    <source>
    </source>
</evidence>
<evidence type="ECO:0000303" key="5">
    <source>
    </source>
</evidence>
<evidence type="ECO:0000305" key="6"/>
<evidence type="ECO:0000312" key="7">
    <source>
        <dbReference type="EMBL" id="AAN13897.1"/>
    </source>
</evidence>
<evidence type="ECO:0000312" key="8">
    <source>
        <dbReference type="FlyBase" id="FBgn0019960"/>
    </source>
</evidence>
<accession>P91928</accession>
<accession>Q8IN13</accession>
<accession>Q9V3K0</accession>
<protein>
    <recommendedName>
        <fullName>MICOS complex subunit Mic60</fullName>
    </recommendedName>
</protein>
<keyword id="KW-0025">Alternative splicing</keyword>
<keyword id="KW-0175">Coiled coil</keyword>
<keyword id="KW-0472">Membrane</keyword>
<keyword id="KW-0496">Mitochondrion</keyword>
<keyword id="KW-0999">Mitochondrion inner membrane</keyword>
<keyword id="KW-1185">Reference proteome</keyword>
<keyword id="KW-0812">Transmembrane</keyword>
<keyword id="KW-1133">Transmembrane helix</keyword>
<sequence length="739" mass="82014">MYRLAVRDQCKCALQRTLQQTTANNRQFGGSSSGSGGREQGRRQQEEQGQQGDQGYQGYQSLPPHMREAGFGKVVLFVSPLAAVGGVITYAKYDDDFRKLVEKNVPGAGSVIKVALQEEPPFKGITKNVNDQIDKVKSGIETVTSTVDSVTSKVTGLFGGGSGDDKSKKSKVEPVKATPAEEKRPSKPSEVSKTEAKPVSKPAAAAAPAPAAKPKDNPLPRDVVELEKAIELSAQLAVKEYNVAIGVLKGFNDDVRKVVDKAVENGENSLWTTLKNRASARDTAVATAERAAREAQEKIVACEIALSAAATAQNAKKVEAVRDKIKKLVDHIGNVKDELYRHKDTASVSDKYWRNVEKARNYFIDEIESIFPGLSLADKKLNLSKEDLDLFILHAYTHVLAYQKELQRLQTDGELRLKRAIDSVRGDNDSEALRAQLEYHLEAERRKLAVENQKKIFHIHAESDKLLRLQLKKQAEAHADHIKDIVAQRETDLTRSFKRELEDKLATEKANYKLQLAGMLGKLRGMDAALAERADAERTANQAQALWAACQALWASVRAATPGVHYKDRLRPLKNEINAIAKVAKGDDLVAAVLESVPKEAQERGVYPEDALRERFLNVERVARRLALVPEEGAGLPIYFLSYLQSLFILRPDNPISKDELENKPFDYSKLDTYDILNRARYHVDRSDFLQALKYMNLLQGASRKIAGEWMKEARLMLETQQAANTLMAHAAASGLLYL</sequence>
<comment type="function">
    <text evidence="1">Component of the MICOS complex, a large protein complex of the mitochondrial inner membrane that plays crucial roles in the maintenance of crista junctions, inner membrane architecture, and formation of contact sites to the outer membrane (By similarity).</text>
</comment>
<comment type="subunit">
    <text evidence="1 4">Component of the mitochondrial contact site and cristae organizing system (MICOS) complex (By similarity). Interacts with the mitochondria-shaping protein Opa1 (PubMed:24998521).</text>
</comment>
<comment type="subcellular location">
    <subcellularLocation>
        <location evidence="4">Mitochondrion inner membrane</location>
        <topology evidence="6">Single-pass membrane protein</topology>
    </subcellularLocation>
</comment>
<comment type="alternative products">
    <event type="alternative splicing"/>
    <isoform>
        <id>P91928-1</id>
        <name>C</name>
        <sequence type="displayed"/>
    </isoform>
    <isoform>
        <id>P91928-2</id>
        <name evidence="5">B</name>
        <sequence type="described" ref="VSP_007006"/>
    </isoform>
</comment>
<comment type="similarity">
    <text evidence="6">Belongs to the MICOS complex subunit Mic60 family.</text>
</comment>
<comment type="sequence caution" evidence="6">
    <conflict type="erroneous initiation">
        <sequence resource="EMBL-CDS" id="CAA71851"/>
    </conflict>
</comment>
<name>MIC60_DROME</name>
<reference evidence="6" key="1">
    <citation type="journal article" date="2000" name="Science">
        <title>The genome sequence of Drosophila melanogaster.</title>
        <authorList>
            <person name="Adams M.D."/>
            <person name="Celniker S.E."/>
            <person name="Holt R.A."/>
            <person name="Evans C.A."/>
            <person name="Gocayne J.D."/>
            <person name="Amanatides P.G."/>
            <person name="Scherer S.E."/>
            <person name="Li P.W."/>
            <person name="Hoskins R.A."/>
            <person name="Galle R.F."/>
            <person name="George R.A."/>
            <person name="Lewis S.E."/>
            <person name="Richards S."/>
            <person name="Ashburner M."/>
            <person name="Henderson S.N."/>
            <person name="Sutton G.G."/>
            <person name="Wortman J.R."/>
            <person name="Yandell M.D."/>
            <person name="Zhang Q."/>
            <person name="Chen L.X."/>
            <person name="Brandon R.C."/>
            <person name="Rogers Y.-H.C."/>
            <person name="Blazej R.G."/>
            <person name="Champe M."/>
            <person name="Pfeiffer B.D."/>
            <person name="Wan K.H."/>
            <person name="Doyle C."/>
            <person name="Baxter E.G."/>
            <person name="Helt G."/>
            <person name="Nelson C.R."/>
            <person name="Miklos G.L.G."/>
            <person name="Abril J.F."/>
            <person name="Agbayani A."/>
            <person name="An H.-J."/>
            <person name="Andrews-Pfannkoch C."/>
            <person name="Baldwin D."/>
            <person name="Ballew R.M."/>
            <person name="Basu A."/>
            <person name="Baxendale J."/>
            <person name="Bayraktaroglu L."/>
            <person name="Beasley E.M."/>
            <person name="Beeson K.Y."/>
            <person name="Benos P.V."/>
            <person name="Berman B.P."/>
            <person name="Bhandari D."/>
            <person name="Bolshakov S."/>
            <person name="Borkova D."/>
            <person name="Botchan M.R."/>
            <person name="Bouck J."/>
            <person name="Brokstein P."/>
            <person name="Brottier P."/>
            <person name="Burtis K.C."/>
            <person name="Busam D.A."/>
            <person name="Butler H."/>
            <person name="Cadieu E."/>
            <person name="Center A."/>
            <person name="Chandra I."/>
            <person name="Cherry J.M."/>
            <person name="Cawley S."/>
            <person name="Dahlke C."/>
            <person name="Davenport L.B."/>
            <person name="Davies P."/>
            <person name="de Pablos B."/>
            <person name="Delcher A."/>
            <person name="Deng Z."/>
            <person name="Mays A.D."/>
            <person name="Dew I."/>
            <person name="Dietz S.M."/>
            <person name="Dodson K."/>
            <person name="Doup L.E."/>
            <person name="Downes M."/>
            <person name="Dugan-Rocha S."/>
            <person name="Dunkov B.C."/>
            <person name="Dunn P."/>
            <person name="Durbin K.J."/>
            <person name="Evangelista C.C."/>
            <person name="Ferraz C."/>
            <person name="Ferriera S."/>
            <person name="Fleischmann W."/>
            <person name="Fosler C."/>
            <person name="Gabrielian A.E."/>
            <person name="Garg N.S."/>
            <person name="Gelbart W.M."/>
            <person name="Glasser K."/>
            <person name="Glodek A."/>
            <person name="Gong F."/>
            <person name="Gorrell J.H."/>
            <person name="Gu Z."/>
            <person name="Guan P."/>
            <person name="Harris M."/>
            <person name="Harris N.L."/>
            <person name="Harvey D.A."/>
            <person name="Heiman T.J."/>
            <person name="Hernandez J.R."/>
            <person name="Houck J."/>
            <person name="Hostin D."/>
            <person name="Houston K.A."/>
            <person name="Howland T.J."/>
            <person name="Wei M.-H."/>
            <person name="Ibegwam C."/>
            <person name="Jalali M."/>
            <person name="Kalush F."/>
            <person name="Karpen G.H."/>
            <person name="Ke Z."/>
            <person name="Kennison J.A."/>
            <person name="Ketchum K.A."/>
            <person name="Kimmel B.E."/>
            <person name="Kodira C.D."/>
            <person name="Kraft C.L."/>
            <person name="Kravitz S."/>
            <person name="Kulp D."/>
            <person name="Lai Z."/>
            <person name="Lasko P."/>
            <person name="Lei Y."/>
            <person name="Levitsky A.A."/>
            <person name="Li J.H."/>
            <person name="Li Z."/>
            <person name="Liang Y."/>
            <person name="Lin X."/>
            <person name="Liu X."/>
            <person name="Mattei B."/>
            <person name="McIntosh T.C."/>
            <person name="McLeod M.P."/>
            <person name="McPherson D."/>
            <person name="Merkulov G."/>
            <person name="Milshina N.V."/>
            <person name="Mobarry C."/>
            <person name="Morris J."/>
            <person name="Moshrefi A."/>
            <person name="Mount S.M."/>
            <person name="Moy M."/>
            <person name="Murphy B."/>
            <person name="Murphy L."/>
            <person name="Muzny D.M."/>
            <person name="Nelson D.L."/>
            <person name="Nelson D.R."/>
            <person name="Nelson K.A."/>
            <person name="Nixon K."/>
            <person name="Nusskern D.R."/>
            <person name="Pacleb J.M."/>
            <person name="Palazzolo M."/>
            <person name="Pittman G.S."/>
            <person name="Pan S."/>
            <person name="Pollard J."/>
            <person name="Puri V."/>
            <person name="Reese M.G."/>
            <person name="Reinert K."/>
            <person name="Remington K."/>
            <person name="Saunders R.D.C."/>
            <person name="Scheeler F."/>
            <person name="Shen H."/>
            <person name="Shue B.C."/>
            <person name="Siden-Kiamos I."/>
            <person name="Simpson M."/>
            <person name="Skupski M.P."/>
            <person name="Smith T.J."/>
            <person name="Spier E."/>
            <person name="Spradling A.C."/>
            <person name="Stapleton M."/>
            <person name="Strong R."/>
            <person name="Sun E."/>
            <person name="Svirskas R."/>
            <person name="Tector C."/>
            <person name="Turner R."/>
            <person name="Venter E."/>
            <person name="Wang A.H."/>
            <person name="Wang X."/>
            <person name="Wang Z.-Y."/>
            <person name="Wassarman D.A."/>
            <person name="Weinstock G.M."/>
            <person name="Weissenbach J."/>
            <person name="Williams S.M."/>
            <person name="Woodage T."/>
            <person name="Worley K.C."/>
            <person name="Wu D."/>
            <person name="Yang S."/>
            <person name="Yao Q.A."/>
            <person name="Ye J."/>
            <person name="Yeh R.-F."/>
            <person name="Zaveri J.S."/>
            <person name="Zhan M."/>
            <person name="Zhang G."/>
            <person name="Zhao Q."/>
            <person name="Zheng L."/>
            <person name="Zheng X.H."/>
            <person name="Zhong F.N."/>
            <person name="Zhong W."/>
            <person name="Zhou X."/>
            <person name="Zhu S.C."/>
            <person name="Zhu X."/>
            <person name="Smith H.O."/>
            <person name="Gibbs R.A."/>
            <person name="Myers E.W."/>
            <person name="Rubin G.M."/>
            <person name="Venter J.C."/>
        </authorList>
    </citation>
    <scope>NUCLEOTIDE SEQUENCE [LARGE SCALE GENOMIC DNA]</scope>
    <source>
        <strain>Berkeley</strain>
    </source>
</reference>
<reference evidence="6" key="2">
    <citation type="journal article" date="2002" name="Genome Biol.">
        <title>Annotation of the Drosophila melanogaster euchromatic genome: a systematic review.</title>
        <authorList>
            <person name="Misra S."/>
            <person name="Crosby M.A."/>
            <person name="Mungall C.J."/>
            <person name="Matthews B.B."/>
            <person name="Campbell K.S."/>
            <person name="Hradecky P."/>
            <person name="Huang Y."/>
            <person name="Kaminker J.S."/>
            <person name="Millburn G.H."/>
            <person name="Prochnik S.E."/>
            <person name="Smith C.D."/>
            <person name="Tupy J.L."/>
            <person name="Whitfield E.J."/>
            <person name="Bayraktaroglu L."/>
            <person name="Berman B.P."/>
            <person name="Bettencourt B.R."/>
            <person name="Celniker S.E."/>
            <person name="de Grey A.D.N.J."/>
            <person name="Drysdale R.A."/>
            <person name="Harris N.L."/>
            <person name="Richter J."/>
            <person name="Russo S."/>
            <person name="Schroeder A.J."/>
            <person name="Shu S.Q."/>
            <person name="Stapleton M."/>
            <person name="Yamada C."/>
            <person name="Ashburner M."/>
            <person name="Gelbart W.M."/>
            <person name="Rubin G.M."/>
            <person name="Lewis S.E."/>
        </authorList>
    </citation>
    <scope>GENOME REANNOTATION</scope>
    <scope>ALTERNATIVE SPLICING</scope>
    <source>
        <strain>Berkeley</strain>
    </source>
</reference>
<reference evidence="6" key="3">
    <citation type="journal article" date="2000" name="Science">
        <title>A Drosophila complementary DNA resource.</title>
        <authorList>
            <person name="Rubin G.M."/>
            <person name="Hong L."/>
            <person name="Brokstein P."/>
            <person name="Evans-Holm M."/>
            <person name="Frise E."/>
            <person name="Stapleton M."/>
            <person name="Harvey D.A."/>
        </authorList>
    </citation>
    <scope>NUCLEOTIDE SEQUENCE [LARGE SCALE MRNA] (ISOFORM C)</scope>
    <source>
        <strain>Berkeley</strain>
        <tissue>Head</tissue>
    </source>
</reference>
<reference evidence="6" key="4">
    <citation type="journal article" date="1999" name="Mol. Gen. Genet.">
        <title>Identification of nuclear genes encoding mitochondrial proteins: isolation of a collection of D. melanogaster cDNAs homologous to sequences in the Human Gene Index database.</title>
        <authorList>
            <person name="Caggese C."/>
            <person name="Ragone G."/>
            <person name="Perrini B."/>
            <person name="Moschetti R."/>
            <person name="de Pinto V."/>
            <person name="Caizzi R."/>
            <person name="Barsanti P."/>
        </authorList>
    </citation>
    <scope>NUCLEOTIDE SEQUENCE [MRNA] OF 1-409 (ISOFORM C)</scope>
    <source>
        <tissue>Ovary</tissue>
    </source>
</reference>
<reference key="5">
    <citation type="journal article" date="2014" name="Int. J. Biochem. Cell Biol.">
        <title>A proteomic screen with Drosophila Opa1-like identifies Hsc70-5/Mortalin as a regulator of mitochondrial morphology and cellular homeostasis.</title>
        <authorList>
            <person name="Banerjee S."/>
            <person name="Chinthapalli B."/>
        </authorList>
    </citation>
    <scope>SUBUNIT</scope>
    <scope>SUBCELLULAR LOCATION</scope>
</reference>
<organism evidence="7">
    <name type="scientific">Drosophila melanogaster</name>
    <name type="common">Fruit fly</name>
    <dbReference type="NCBI Taxonomy" id="7227"/>
    <lineage>
        <taxon>Eukaryota</taxon>
        <taxon>Metazoa</taxon>
        <taxon>Ecdysozoa</taxon>
        <taxon>Arthropoda</taxon>
        <taxon>Hexapoda</taxon>
        <taxon>Insecta</taxon>
        <taxon>Pterygota</taxon>
        <taxon>Neoptera</taxon>
        <taxon>Endopterygota</taxon>
        <taxon>Diptera</taxon>
        <taxon>Brachycera</taxon>
        <taxon>Muscomorpha</taxon>
        <taxon>Ephydroidea</taxon>
        <taxon>Drosophilidae</taxon>
        <taxon>Drosophila</taxon>
        <taxon>Sophophora</taxon>
    </lineage>
</organism>
<dbReference type="EMBL" id="AE014297">
    <property type="protein sequence ID" value="AAF55943.3"/>
    <property type="molecule type" value="Genomic_DNA"/>
</dbReference>
<dbReference type="EMBL" id="AE014297">
    <property type="protein sequence ID" value="AAN13897.1"/>
    <property type="molecule type" value="Genomic_DNA"/>
</dbReference>
<dbReference type="EMBL" id="AF145623">
    <property type="protein sequence ID" value="AAD38598.1"/>
    <property type="molecule type" value="mRNA"/>
</dbReference>
<dbReference type="EMBL" id="Y10910">
    <property type="protein sequence ID" value="CAA71851.1"/>
    <property type="status" value="ALT_INIT"/>
    <property type="molecule type" value="mRNA"/>
</dbReference>
<dbReference type="RefSeq" id="NP_001262818.1">
    <molecule id="P91928-1"/>
    <property type="nucleotide sequence ID" value="NM_001275889.1"/>
</dbReference>
<dbReference type="RefSeq" id="NP_524444.3">
    <molecule id="P91928-1"/>
    <property type="nucleotide sequence ID" value="NM_079720.3"/>
</dbReference>
<dbReference type="SMR" id="P91928"/>
<dbReference type="BioGRID" id="67548">
    <property type="interactions" value="20"/>
</dbReference>
<dbReference type="ComplexPortal" id="CPX-25732">
    <property type="entry name" value="MICOS mitochondrial contact site and cristae organizing system complex, MIC10A variant"/>
</dbReference>
<dbReference type="ComplexPortal" id="CPX-25733">
    <property type="entry name" value="MICOS mitochondrial contact site and cristae organizing system complex, MIC10B variant"/>
</dbReference>
<dbReference type="ComplexPortal" id="CPX-25735">
    <property type="entry name" value="MICOS mitochondrial contact site and cristae organizing system complex, MIC10C variant"/>
</dbReference>
<dbReference type="DIP" id="DIP-23966N"/>
<dbReference type="FunCoup" id="P91928">
    <property type="interactions" value="1121"/>
</dbReference>
<dbReference type="IntAct" id="P91928">
    <property type="interactions" value="8"/>
</dbReference>
<dbReference type="MINT" id="P91928"/>
<dbReference type="STRING" id="7227.FBpp0307187"/>
<dbReference type="GlyGen" id="P91928">
    <property type="glycosylation" value="1 site"/>
</dbReference>
<dbReference type="PaxDb" id="7227-FBpp0288710"/>
<dbReference type="EnsemblMetazoa" id="FBtr0290271">
    <molecule id="P91928-1"/>
    <property type="protein sequence ID" value="FBpp0288710"/>
    <property type="gene ID" value="FBgn0019960"/>
</dbReference>
<dbReference type="EnsemblMetazoa" id="FBtr0335199">
    <molecule id="P91928-1"/>
    <property type="protein sequence ID" value="FBpp0307186"/>
    <property type="gene ID" value="FBgn0019960"/>
</dbReference>
<dbReference type="GeneID" id="42587"/>
<dbReference type="KEGG" id="dme:Dmel_CG6455"/>
<dbReference type="AGR" id="FB:FBgn0019960"/>
<dbReference type="CTD" id="42587"/>
<dbReference type="FlyBase" id="FBgn0019960">
    <property type="gene designation" value="Mitofilin"/>
</dbReference>
<dbReference type="VEuPathDB" id="VectorBase:FBgn0019960"/>
<dbReference type="eggNOG" id="KOG1854">
    <property type="taxonomic scope" value="Eukaryota"/>
</dbReference>
<dbReference type="GeneTree" id="ENSGT00390000002313"/>
<dbReference type="InParanoid" id="P91928"/>
<dbReference type="OrthoDB" id="10261039at2759"/>
<dbReference type="PhylomeDB" id="P91928"/>
<dbReference type="BioGRID-ORCS" id="42587">
    <property type="hits" value="0 hits in 1 CRISPR screen"/>
</dbReference>
<dbReference type="GenomeRNAi" id="42587"/>
<dbReference type="PRO" id="PR:P91928"/>
<dbReference type="Proteomes" id="UP000000803">
    <property type="component" value="Chromosome 3R"/>
</dbReference>
<dbReference type="Bgee" id="FBgn0019960">
    <property type="expression patterns" value="Expressed in adult hindgut (Drosophila) and 212 other cell types or tissues"/>
</dbReference>
<dbReference type="ExpressionAtlas" id="P91928">
    <property type="expression patterns" value="baseline and differential"/>
</dbReference>
<dbReference type="GO" id="GO:0005737">
    <property type="term" value="C:cytoplasm"/>
    <property type="evidence" value="ECO:0000314"/>
    <property type="project" value="FlyBase"/>
</dbReference>
<dbReference type="GO" id="GO:0061617">
    <property type="term" value="C:MICOS complex"/>
    <property type="evidence" value="ECO:0000314"/>
    <property type="project" value="FlyBase"/>
</dbReference>
<dbReference type="GO" id="GO:0005743">
    <property type="term" value="C:mitochondrial inner membrane"/>
    <property type="evidence" value="ECO:0000250"/>
    <property type="project" value="UniProtKB"/>
</dbReference>
<dbReference type="GO" id="GO:0005739">
    <property type="term" value="C:mitochondrion"/>
    <property type="evidence" value="ECO:0000314"/>
    <property type="project" value="FlyBase"/>
</dbReference>
<dbReference type="GO" id="GO:0043008">
    <property type="term" value="F:ATP-dependent protein binding"/>
    <property type="evidence" value="ECO:0000353"/>
    <property type="project" value="FlyBase"/>
</dbReference>
<dbReference type="GO" id="GO:0019901">
    <property type="term" value="F:protein kinase binding"/>
    <property type="evidence" value="ECO:0000353"/>
    <property type="project" value="FlyBase"/>
</dbReference>
<dbReference type="GO" id="GO:0042407">
    <property type="term" value="P:cristae formation"/>
    <property type="evidence" value="ECO:0000318"/>
    <property type="project" value="GO_Central"/>
</dbReference>
<dbReference type="GO" id="GO:0007005">
    <property type="term" value="P:mitochondrion organization"/>
    <property type="evidence" value="ECO:0000315"/>
    <property type="project" value="FlyBase"/>
</dbReference>
<dbReference type="InterPro" id="IPR019133">
    <property type="entry name" value="MIC60"/>
</dbReference>
<dbReference type="PANTHER" id="PTHR15415:SF7">
    <property type="entry name" value="MICOS COMPLEX SUBUNIT MIC60"/>
    <property type="match status" value="1"/>
</dbReference>
<dbReference type="PANTHER" id="PTHR15415">
    <property type="entry name" value="MITOFILIN"/>
    <property type="match status" value="1"/>
</dbReference>
<dbReference type="Pfam" id="PF09731">
    <property type="entry name" value="Mitofilin"/>
    <property type="match status" value="1"/>
</dbReference>